<reference key="1">
    <citation type="journal article" date="2010" name="J. Bacteriol.">
        <title>Genome sequence of the deep-rooted Yersinia pestis strain Angola reveals new insights into the evolution and pangenome of the plague bacterium.</title>
        <authorList>
            <person name="Eppinger M."/>
            <person name="Worsham P.L."/>
            <person name="Nikolich M.P."/>
            <person name="Riley D.R."/>
            <person name="Sebastian Y."/>
            <person name="Mou S."/>
            <person name="Achtman M."/>
            <person name="Lindler L.E."/>
            <person name="Ravel J."/>
        </authorList>
    </citation>
    <scope>NUCLEOTIDE SEQUENCE [LARGE SCALE GENOMIC DNA]</scope>
    <source>
        <strain>Angola</strain>
    </source>
</reference>
<comment type="function">
    <text evidence="1">This enzyme is involved in nucleotide metabolism: it produces dUMP, the immediate precursor of thymidine nucleotides and it decreases the intracellular concentration of dUTP so that uracil cannot be incorporated into DNA.</text>
</comment>
<comment type="catalytic activity">
    <reaction evidence="1">
        <text>dUTP + H2O = dUMP + diphosphate + H(+)</text>
        <dbReference type="Rhea" id="RHEA:10248"/>
        <dbReference type="ChEBI" id="CHEBI:15377"/>
        <dbReference type="ChEBI" id="CHEBI:15378"/>
        <dbReference type="ChEBI" id="CHEBI:33019"/>
        <dbReference type="ChEBI" id="CHEBI:61555"/>
        <dbReference type="ChEBI" id="CHEBI:246422"/>
        <dbReference type="EC" id="3.6.1.23"/>
    </reaction>
</comment>
<comment type="cofactor">
    <cofactor evidence="1">
        <name>Mg(2+)</name>
        <dbReference type="ChEBI" id="CHEBI:18420"/>
    </cofactor>
</comment>
<comment type="pathway">
    <text evidence="1">Pyrimidine metabolism; dUMP biosynthesis; dUMP from dCTP (dUTP route): step 2/2.</text>
</comment>
<comment type="similarity">
    <text evidence="1">Belongs to the dUTPase family.</text>
</comment>
<name>DUT_YERPG</name>
<proteinExistence type="inferred from homology"/>
<accession>A9R672</accession>
<organism>
    <name type="scientific">Yersinia pestis bv. Antiqua (strain Angola)</name>
    <dbReference type="NCBI Taxonomy" id="349746"/>
    <lineage>
        <taxon>Bacteria</taxon>
        <taxon>Pseudomonadati</taxon>
        <taxon>Pseudomonadota</taxon>
        <taxon>Gammaproteobacteria</taxon>
        <taxon>Enterobacterales</taxon>
        <taxon>Yersiniaceae</taxon>
        <taxon>Yersinia</taxon>
    </lineage>
</organism>
<protein>
    <recommendedName>
        <fullName evidence="1">Deoxyuridine 5'-triphosphate nucleotidohydrolase</fullName>
        <shortName evidence="1">dUTPase</shortName>
        <ecNumber evidence="1">3.6.1.23</ecNumber>
    </recommendedName>
    <alternativeName>
        <fullName evidence="1">dUTP pyrophosphatase</fullName>
    </alternativeName>
</protein>
<dbReference type="EC" id="3.6.1.23" evidence="1"/>
<dbReference type="EMBL" id="CP000901">
    <property type="protein sequence ID" value="ABX86707.1"/>
    <property type="molecule type" value="Genomic_DNA"/>
</dbReference>
<dbReference type="SMR" id="A9R672"/>
<dbReference type="KEGG" id="ypg:YpAngola_A0053"/>
<dbReference type="UniPathway" id="UPA00610">
    <property type="reaction ID" value="UER00666"/>
</dbReference>
<dbReference type="GO" id="GO:0004170">
    <property type="term" value="F:dUTP diphosphatase activity"/>
    <property type="evidence" value="ECO:0007669"/>
    <property type="project" value="UniProtKB-UniRule"/>
</dbReference>
<dbReference type="GO" id="GO:0000287">
    <property type="term" value="F:magnesium ion binding"/>
    <property type="evidence" value="ECO:0007669"/>
    <property type="project" value="UniProtKB-UniRule"/>
</dbReference>
<dbReference type="GO" id="GO:0006226">
    <property type="term" value="P:dUMP biosynthetic process"/>
    <property type="evidence" value="ECO:0007669"/>
    <property type="project" value="UniProtKB-UniRule"/>
</dbReference>
<dbReference type="GO" id="GO:0046081">
    <property type="term" value="P:dUTP catabolic process"/>
    <property type="evidence" value="ECO:0007669"/>
    <property type="project" value="InterPro"/>
</dbReference>
<dbReference type="CDD" id="cd07557">
    <property type="entry name" value="trimeric_dUTPase"/>
    <property type="match status" value="1"/>
</dbReference>
<dbReference type="FunFam" id="2.70.40.10:FF:000002">
    <property type="entry name" value="dUTP diphosphatase"/>
    <property type="match status" value="1"/>
</dbReference>
<dbReference type="Gene3D" id="2.70.40.10">
    <property type="match status" value="1"/>
</dbReference>
<dbReference type="HAMAP" id="MF_00116">
    <property type="entry name" value="dUTPase_bact"/>
    <property type="match status" value="1"/>
</dbReference>
<dbReference type="InterPro" id="IPR008181">
    <property type="entry name" value="dUTPase"/>
</dbReference>
<dbReference type="InterPro" id="IPR029054">
    <property type="entry name" value="dUTPase-like"/>
</dbReference>
<dbReference type="InterPro" id="IPR036157">
    <property type="entry name" value="dUTPase-like_sf"/>
</dbReference>
<dbReference type="InterPro" id="IPR033704">
    <property type="entry name" value="dUTPase_trimeric"/>
</dbReference>
<dbReference type="NCBIfam" id="TIGR00576">
    <property type="entry name" value="dut"/>
    <property type="match status" value="1"/>
</dbReference>
<dbReference type="NCBIfam" id="NF001862">
    <property type="entry name" value="PRK00601.1"/>
    <property type="match status" value="1"/>
</dbReference>
<dbReference type="PANTHER" id="PTHR11241">
    <property type="entry name" value="DEOXYURIDINE 5'-TRIPHOSPHATE NUCLEOTIDOHYDROLASE"/>
    <property type="match status" value="1"/>
</dbReference>
<dbReference type="PANTHER" id="PTHR11241:SF0">
    <property type="entry name" value="DEOXYURIDINE 5'-TRIPHOSPHATE NUCLEOTIDOHYDROLASE"/>
    <property type="match status" value="1"/>
</dbReference>
<dbReference type="Pfam" id="PF00692">
    <property type="entry name" value="dUTPase"/>
    <property type="match status" value="1"/>
</dbReference>
<dbReference type="SUPFAM" id="SSF51283">
    <property type="entry name" value="dUTPase-like"/>
    <property type="match status" value="1"/>
</dbReference>
<feature type="chain" id="PRO_1000095005" description="Deoxyuridine 5'-triphosphate nucleotidohydrolase">
    <location>
        <begin position="1"/>
        <end position="151"/>
    </location>
</feature>
<feature type="binding site" evidence="1">
    <location>
        <begin position="70"/>
        <end position="72"/>
    </location>
    <ligand>
        <name>substrate</name>
    </ligand>
</feature>
<feature type="binding site" evidence="1">
    <location>
        <position position="83"/>
    </location>
    <ligand>
        <name>substrate</name>
    </ligand>
</feature>
<feature type="binding site" evidence="1">
    <location>
        <begin position="87"/>
        <end position="89"/>
    </location>
    <ligand>
        <name>substrate</name>
    </ligand>
</feature>
<feature type="binding site" evidence="1">
    <location>
        <position position="97"/>
    </location>
    <ligand>
        <name>substrate</name>
    </ligand>
</feature>
<sequence>MKKIDIKILDPRVGNEFPLPTYATEGSAGLDLRACLDHAVELQPGQTTLLPTGLAIHIGDSALAAVILPRSGLGHKHGIVLGNLVGLIDSDYQGQLMVSVWNRGQQPFTIEPGERIAQMVFVPVVQAEFNLVEDFTDSERGTGGFGHSGRQ</sequence>
<keyword id="KW-0378">Hydrolase</keyword>
<keyword id="KW-0460">Magnesium</keyword>
<keyword id="KW-0479">Metal-binding</keyword>
<keyword id="KW-0546">Nucleotide metabolism</keyword>
<gene>
    <name evidence="1" type="primary">dut</name>
    <name type="ordered locus">YpAngola_A0053</name>
</gene>
<evidence type="ECO:0000255" key="1">
    <source>
        <dbReference type="HAMAP-Rule" id="MF_00116"/>
    </source>
</evidence>